<organism>
    <name type="scientific">Staphylococcus aureus (strain N315)</name>
    <dbReference type="NCBI Taxonomy" id="158879"/>
    <lineage>
        <taxon>Bacteria</taxon>
        <taxon>Bacillati</taxon>
        <taxon>Bacillota</taxon>
        <taxon>Bacilli</taxon>
        <taxon>Bacillales</taxon>
        <taxon>Staphylococcaceae</taxon>
        <taxon>Staphylococcus</taxon>
    </lineage>
</organism>
<comment type="function">
    <text evidence="1">Member of the two-component regulatory system HptS/HptR that regulates genes involved in hexose phosphate transport system in response to changes in extracellular phosphate sources. Activates uhpT expression to facilitate glucose-6-phosphate/G6P utilization by directly binding to its promoter. Antagonizes CcpA-dependent transcription of a subset of CcpA-regulated genes involved in antibiotic susceptibility.</text>
</comment>
<comment type="subcellular location">
    <subcellularLocation>
        <location evidence="4">Cytoplasm</location>
    </subcellularLocation>
</comment>
<comment type="PTM">
    <text evidence="1">Phosphorylated by HptS.</text>
</comment>
<reference key="1">
    <citation type="journal article" date="2001" name="Lancet">
        <title>Whole genome sequencing of meticillin-resistant Staphylococcus aureus.</title>
        <authorList>
            <person name="Kuroda M."/>
            <person name="Ohta T."/>
            <person name="Uchiyama I."/>
            <person name="Baba T."/>
            <person name="Yuzawa H."/>
            <person name="Kobayashi I."/>
            <person name="Cui L."/>
            <person name="Oguchi A."/>
            <person name="Aoki K."/>
            <person name="Nagai Y."/>
            <person name="Lian J.-Q."/>
            <person name="Ito T."/>
            <person name="Kanamori M."/>
            <person name="Matsumaru H."/>
            <person name="Maruyama A."/>
            <person name="Murakami H."/>
            <person name="Hosoyama A."/>
            <person name="Mizutani-Ui Y."/>
            <person name="Takahashi N.K."/>
            <person name="Sawano T."/>
            <person name="Inoue R."/>
            <person name="Kaito C."/>
            <person name="Sekimizu K."/>
            <person name="Hirakawa H."/>
            <person name="Kuhara S."/>
            <person name="Goto S."/>
            <person name="Yabuzaki J."/>
            <person name="Kanehisa M."/>
            <person name="Yamashita A."/>
            <person name="Oshima K."/>
            <person name="Furuya K."/>
            <person name="Yoshino C."/>
            <person name="Shiba T."/>
            <person name="Hattori M."/>
            <person name="Ogasawara N."/>
            <person name="Hayashi H."/>
            <person name="Hiramatsu K."/>
        </authorList>
    </citation>
    <scope>NUCLEOTIDE SEQUENCE [LARGE SCALE GENOMIC DNA]</scope>
    <source>
        <strain>N315</strain>
    </source>
</reference>
<reference key="2">
    <citation type="submission" date="2007-10" db="UniProtKB">
        <title>Shotgun proteomic analysis of total and membrane protein extracts of S. aureus strain N315.</title>
        <authorList>
            <person name="Vaezzadeh A.R."/>
            <person name="Deshusses J."/>
            <person name="Lescuyer P."/>
            <person name="Hochstrasser D.F."/>
        </authorList>
    </citation>
    <scope>IDENTIFICATION BY MASS SPECTROMETRY [LARGE SCALE ANALYSIS]</scope>
    <source>
        <strain>N315</strain>
    </source>
</reference>
<accession>Q7A7X9</accession>
<protein>
    <recommendedName>
        <fullName>Transcriptional regulatory protein HptR</fullName>
    </recommendedName>
</protein>
<proteinExistence type="evidence at protein level"/>
<gene>
    <name type="primary">hptR</name>
    <name type="ordered locus">SA0215</name>
</gene>
<keyword id="KW-0963">Cytoplasm</keyword>
<keyword id="KW-0238">DNA-binding</keyword>
<keyword id="KW-0597">Phosphoprotein</keyword>
<keyword id="KW-0804">Transcription</keyword>
<keyword id="KW-0805">Transcription regulation</keyword>
<keyword id="KW-0902">Two-component regulatory system</keyword>
<name>HPTR_STAAN</name>
<evidence type="ECO:0000250" key="1">
    <source>
        <dbReference type="UniProtKB" id="Q2G1E1"/>
    </source>
</evidence>
<evidence type="ECO:0000255" key="2">
    <source>
        <dbReference type="PROSITE-ProRule" id="PRU00169"/>
    </source>
</evidence>
<evidence type="ECO:0000255" key="3">
    <source>
        <dbReference type="PROSITE-ProRule" id="PRU00593"/>
    </source>
</evidence>
<evidence type="ECO:0000305" key="4"/>
<feature type="chain" id="PRO_0000299114" description="Transcriptional regulatory protein HptR">
    <location>
        <begin position="1"/>
        <end position="252"/>
    </location>
</feature>
<feature type="domain" description="Response regulatory" evidence="2">
    <location>
        <begin position="3"/>
        <end position="118"/>
    </location>
</feature>
<feature type="domain" description="HTH araC/xylS-type" evidence="3">
    <location>
        <begin position="153"/>
        <end position="250"/>
    </location>
</feature>
<feature type="DNA-binding region" description="H-T-H motif" evidence="3">
    <location>
        <begin position="170"/>
        <end position="191"/>
    </location>
</feature>
<feature type="DNA-binding region" description="H-T-H motif" evidence="3">
    <location>
        <begin position="217"/>
        <end position="240"/>
    </location>
</feature>
<feature type="modified residue" description="4-aspartylphosphate" evidence="2">
    <location>
        <position position="55"/>
    </location>
</feature>
<dbReference type="EMBL" id="BA000018">
    <property type="protein sequence ID" value="BAB41437.1"/>
    <property type="molecule type" value="Genomic_DNA"/>
</dbReference>
<dbReference type="PIR" id="B89785">
    <property type="entry name" value="B89785"/>
</dbReference>
<dbReference type="RefSeq" id="WP_000477526.1">
    <property type="nucleotide sequence ID" value="NC_002745.2"/>
</dbReference>
<dbReference type="SMR" id="Q7A7X9"/>
<dbReference type="EnsemblBacteria" id="BAB41437">
    <property type="protein sequence ID" value="BAB41437"/>
    <property type="gene ID" value="BAB41437"/>
</dbReference>
<dbReference type="KEGG" id="sau:SA0215"/>
<dbReference type="HOGENOM" id="CLU_000445_5_1_9"/>
<dbReference type="GO" id="GO:0005737">
    <property type="term" value="C:cytoplasm"/>
    <property type="evidence" value="ECO:0007669"/>
    <property type="project" value="UniProtKB-SubCell"/>
</dbReference>
<dbReference type="GO" id="GO:0003700">
    <property type="term" value="F:DNA-binding transcription factor activity"/>
    <property type="evidence" value="ECO:0007669"/>
    <property type="project" value="InterPro"/>
</dbReference>
<dbReference type="GO" id="GO:0043565">
    <property type="term" value="F:sequence-specific DNA binding"/>
    <property type="evidence" value="ECO:0007669"/>
    <property type="project" value="InterPro"/>
</dbReference>
<dbReference type="GO" id="GO:0000160">
    <property type="term" value="P:phosphorelay signal transduction system"/>
    <property type="evidence" value="ECO:0007669"/>
    <property type="project" value="UniProtKB-KW"/>
</dbReference>
<dbReference type="CDD" id="cd17536">
    <property type="entry name" value="REC_YesN-like"/>
    <property type="match status" value="1"/>
</dbReference>
<dbReference type="Gene3D" id="3.40.50.2300">
    <property type="match status" value="1"/>
</dbReference>
<dbReference type="Gene3D" id="1.10.10.60">
    <property type="entry name" value="Homeodomain-like"/>
    <property type="match status" value="2"/>
</dbReference>
<dbReference type="InterPro" id="IPR011006">
    <property type="entry name" value="CheY-like_superfamily"/>
</dbReference>
<dbReference type="InterPro" id="IPR009057">
    <property type="entry name" value="Homeodomain-like_sf"/>
</dbReference>
<dbReference type="InterPro" id="IPR051552">
    <property type="entry name" value="HptR"/>
</dbReference>
<dbReference type="InterPro" id="IPR018060">
    <property type="entry name" value="HTH_AraC"/>
</dbReference>
<dbReference type="InterPro" id="IPR001789">
    <property type="entry name" value="Sig_transdc_resp-reg_receiver"/>
</dbReference>
<dbReference type="PANTHER" id="PTHR42713">
    <property type="entry name" value="HISTIDINE KINASE-RELATED"/>
    <property type="match status" value="1"/>
</dbReference>
<dbReference type="PANTHER" id="PTHR42713:SF3">
    <property type="entry name" value="TRANSCRIPTIONAL REGULATORY PROTEIN HPTR"/>
    <property type="match status" value="1"/>
</dbReference>
<dbReference type="Pfam" id="PF12833">
    <property type="entry name" value="HTH_18"/>
    <property type="match status" value="1"/>
</dbReference>
<dbReference type="Pfam" id="PF00072">
    <property type="entry name" value="Response_reg"/>
    <property type="match status" value="1"/>
</dbReference>
<dbReference type="SMART" id="SM00342">
    <property type="entry name" value="HTH_ARAC"/>
    <property type="match status" value="1"/>
</dbReference>
<dbReference type="SMART" id="SM00448">
    <property type="entry name" value="REC"/>
    <property type="match status" value="1"/>
</dbReference>
<dbReference type="SUPFAM" id="SSF52172">
    <property type="entry name" value="CheY-like"/>
    <property type="match status" value="1"/>
</dbReference>
<dbReference type="SUPFAM" id="SSF46689">
    <property type="entry name" value="Homeodomain-like"/>
    <property type="match status" value="2"/>
</dbReference>
<dbReference type="PROSITE" id="PS01124">
    <property type="entry name" value="HTH_ARAC_FAMILY_2"/>
    <property type="match status" value="1"/>
</dbReference>
<dbReference type="PROSITE" id="PS50110">
    <property type="entry name" value="RESPONSE_REGULATORY"/>
    <property type="match status" value="1"/>
</dbReference>
<sequence>MFKVVICDDERIIREGLKQIIPWGDYHFNTIYTAKDGVEALSLIQQHQPELVITDIRMPRKNGVDLLNDIALLDCNVIILSSYDDFEYMKAGIQHHVLDYLLKPVDHAQLEVILGRLVRTLLEQQSQNGRSLASCHDAFQPLLKVEYDDYYVNQIVDQIKQSYQTKVTVSDLIQHIDVSESYAMRTFKDHVGITIVDYLNRYRILQSLQLLDRHYKHYEIADKVGFSEYKMFSYHFKKYLQMSPSDYCKQAK</sequence>